<protein>
    <recommendedName>
        <fullName>CASP-like protein 1B2</fullName>
        <shortName>PtCASPL1B2</shortName>
    </recommendedName>
</protein>
<sequence>MALQSEEKLEVGYSSLQPKTRKWVLLMLRVLAFFATAAATVVMGLNKETKTLVVATVGSTPIKASLAAKFQHTPAFVFFVIANGLASIHNLVMIMGDLFGQKLDYKGLRLAMIAILDMMTVALVSGGVSAAAFMAELGKNGNSHARWNKICDKFETFCDHGGGALIASFAGLILMLIISVMSIIKLLIKPKPDSTIVVP</sequence>
<accession>B9GIE4</accession>
<feature type="chain" id="PRO_0000412036" description="CASP-like protein 1B2">
    <location>
        <begin position="1"/>
        <end position="199"/>
    </location>
</feature>
<feature type="topological domain" description="Cytoplasmic" evidence="2">
    <location>
        <begin position="1"/>
        <end position="22"/>
    </location>
</feature>
<feature type="transmembrane region" description="Helical" evidence="2">
    <location>
        <begin position="23"/>
        <end position="43"/>
    </location>
</feature>
<feature type="topological domain" description="Extracellular" evidence="2">
    <location>
        <begin position="44"/>
        <end position="74"/>
    </location>
</feature>
<feature type="transmembrane region" description="Helical" evidence="2">
    <location>
        <begin position="75"/>
        <end position="95"/>
    </location>
</feature>
<feature type="topological domain" description="Cytoplasmic" evidence="2">
    <location>
        <begin position="96"/>
        <end position="112"/>
    </location>
</feature>
<feature type="transmembrane region" description="Helical" evidence="2">
    <location>
        <begin position="113"/>
        <end position="133"/>
    </location>
</feature>
<feature type="topological domain" description="Extracellular" evidence="2">
    <location>
        <begin position="134"/>
        <end position="163"/>
    </location>
</feature>
<feature type="transmembrane region" description="Helical" evidence="2">
    <location>
        <begin position="164"/>
        <end position="184"/>
    </location>
</feature>
<feature type="topological domain" description="Cytoplasmic" evidence="2">
    <location>
        <begin position="185"/>
        <end position="199"/>
    </location>
</feature>
<evidence type="ECO:0000250" key="1"/>
<evidence type="ECO:0000255" key="2"/>
<evidence type="ECO:0000305" key="3"/>
<gene>
    <name type="ORF">POPTRDRAFT_798217</name>
</gene>
<dbReference type="EMBL" id="CM009290">
    <property type="protein sequence ID" value="EEE85296.2"/>
    <property type="molecule type" value="Genomic_DNA"/>
</dbReference>
<dbReference type="RefSeq" id="XP_002300491.2">
    <property type="nucleotide sequence ID" value="XM_002300455.2"/>
</dbReference>
<dbReference type="SMR" id="B9GIE4"/>
<dbReference type="FunCoup" id="B9GIE4">
    <property type="interactions" value="634"/>
</dbReference>
<dbReference type="STRING" id="3694.B9GIE4"/>
<dbReference type="KEGG" id="pop:7491385"/>
<dbReference type="eggNOG" id="ENOG502RYH6">
    <property type="taxonomic scope" value="Eukaryota"/>
</dbReference>
<dbReference type="HOGENOM" id="CLU_066104_1_0_1"/>
<dbReference type="InParanoid" id="B9GIE4"/>
<dbReference type="OrthoDB" id="610574at2759"/>
<dbReference type="Proteomes" id="UP000006729">
    <property type="component" value="Chromosome 1"/>
</dbReference>
<dbReference type="ExpressionAtlas" id="B9GIE4">
    <property type="expression patterns" value="differential"/>
</dbReference>
<dbReference type="GO" id="GO:0005886">
    <property type="term" value="C:plasma membrane"/>
    <property type="evidence" value="ECO:0000318"/>
    <property type="project" value="GO_Central"/>
</dbReference>
<dbReference type="InterPro" id="IPR006459">
    <property type="entry name" value="CASP/CASPL"/>
</dbReference>
<dbReference type="InterPro" id="IPR006702">
    <property type="entry name" value="CASP_dom"/>
</dbReference>
<dbReference type="InterPro" id="IPR044173">
    <property type="entry name" value="CASPL"/>
</dbReference>
<dbReference type="NCBIfam" id="TIGR01569">
    <property type="entry name" value="A_tha_TIGR01569"/>
    <property type="match status" value="1"/>
</dbReference>
<dbReference type="PANTHER" id="PTHR36488">
    <property type="entry name" value="CASP-LIKE PROTEIN 1U1"/>
    <property type="match status" value="1"/>
</dbReference>
<dbReference type="PANTHER" id="PTHR36488:SF8">
    <property type="entry name" value="CASP-LIKE PROTEIN 1U1"/>
    <property type="match status" value="1"/>
</dbReference>
<dbReference type="Pfam" id="PF04535">
    <property type="entry name" value="CASP_dom"/>
    <property type="match status" value="1"/>
</dbReference>
<proteinExistence type="inferred from homology"/>
<organism>
    <name type="scientific">Populus trichocarpa</name>
    <name type="common">Western balsam poplar</name>
    <name type="synonym">Populus balsamifera subsp. trichocarpa</name>
    <dbReference type="NCBI Taxonomy" id="3694"/>
    <lineage>
        <taxon>Eukaryota</taxon>
        <taxon>Viridiplantae</taxon>
        <taxon>Streptophyta</taxon>
        <taxon>Embryophyta</taxon>
        <taxon>Tracheophyta</taxon>
        <taxon>Spermatophyta</taxon>
        <taxon>Magnoliopsida</taxon>
        <taxon>eudicotyledons</taxon>
        <taxon>Gunneridae</taxon>
        <taxon>Pentapetalae</taxon>
        <taxon>rosids</taxon>
        <taxon>fabids</taxon>
        <taxon>Malpighiales</taxon>
        <taxon>Salicaceae</taxon>
        <taxon>Saliceae</taxon>
        <taxon>Populus</taxon>
    </lineage>
</organism>
<comment type="subunit">
    <text evidence="1">Homodimer and heterodimers.</text>
</comment>
<comment type="subcellular location">
    <subcellularLocation>
        <location evidence="1">Cell membrane</location>
        <topology evidence="1">Multi-pass membrane protein</topology>
    </subcellularLocation>
</comment>
<comment type="similarity">
    <text evidence="3">Belongs to the Casparian strip membrane proteins (CASP) family.</text>
</comment>
<keyword id="KW-1003">Cell membrane</keyword>
<keyword id="KW-0472">Membrane</keyword>
<keyword id="KW-1185">Reference proteome</keyword>
<keyword id="KW-0812">Transmembrane</keyword>
<keyword id="KW-1133">Transmembrane helix</keyword>
<name>CSPL5_POPTR</name>
<reference key="1">
    <citation type="journal article" date="2006" name="Science">
        <title>The genome of black cottonwood, Populus trichocarpa (Torr. &amp; Gray).</title>
        <authorList>
            <person name="Tuskan G.A."/>
            <person name="Difazio S."/>
            <person name="Jansson S."/>
            <person name="Bohlmann J."/>
            <person name="Grigoriev I."/>
            <person name="Hellsten U."/>
            <person name="Putnam N."/>
            <person name="Ralph S."/>
            <person name="Rombauts S."/>
            <person name="Salamov A."/>
            <person name="Schein J."/>
            <person name="Sterck L."/>
            <person name="Aerts A."/>
            <person name="Bhalerao R.R."/>
            <person name="Bhalerao R.P."/>
            <person name="Blaudez D."/>
            <person name="Boerjan W."/>
            <person name="Brun A."/>
            <person name="Brunner A."/>
            <person name="Busov V."/>
            <person name="Campbell M."/>
            <person name="Carlson J."/>
            <person name="Chalot M."/>
            <person name="Chapman J."/>
            <person name="Chen G.-L."/>
            <person name="Cooper D."/>
            <person name="Coutinho P.M."/>
            <person name="Couturier J."/>
            <person name="Covert S."/>
            <person name="Cronk Q."/>
            <person name="Cunningham R."/>
            <person name="Davis J."/>
            <person name="Degroeve S."/>
            <person name="Dejardin A."/>
            <person name="dePamphilis C.W."/>
            <person name="Detter J."/>
            <person name="Dirks B."/>
            <person name="Dubchak I."/>
            <person name="Duplessis S."/>
            <person name="Ehlting J."/>
            <person name="Ellis B."/>
            <person name="Gendler K."/>
            <person name="Goodstein D."/>
            <person name="Gribskov M."/>
            <person name="Grimwood J."/>
            <person name="Groover A."/>
            <person name="Gunter L."/>
            <person name="Hamberger B."/>
            <person name="Heinze B."/>
            <person name="Helariutta Y."/>
            <person name="Henrissat B."/>
            <person name="Holligan D."/>
            <person name="Holt R."/>
            <person name="Huang W."/>
            <person name="Islam-Faridi N."/>
            <person name="Jones S."/>
            <person name="Jones-Rhoades M."/>
            <person name="Jorgensen R."/>
            <person name="Joshi C."/>
            <person name="Kangasjaervi J."/>
            <person name="Karlsson J."/>
            <person name="Kelleher C."/>
            <person name="Kirkpatrick R."/>
            <person name="Kirst M."/>
            <person name="Kohler A."/>
            <person name="Kalluri U."/>
            <person name="Larimer F."/>
            <person name="Leebens-Mack J."/>
            <person name="Leple J.-C."/>
            <person name="Locascio P."/>
            <person name="Lou Y."/>
            <person name="Lucas S."/>
            <person name="Martin F."/>
            <person name="Montanini B."/>
            <person name="Napoli C."/>
            <person name="Nelson D.R."/>
            <person name="Nelson C."/>
            <person name="Nieminen K."/>
            <person name="Nilsson O."/>
            <person name="Pereda V."/>
            <person name="Peter G."/>
            <person name="Philippe R."/>
            <person name="Pilate G."/>
            <person name="Poliakov A."/>
            <person name="Razumovskaya J."/>
            <person name="Richardson P."/>
            <person name="Rinaldi C."/>
            <person name="Ritland K."/>
            <person name="Rouze P."/>
            <person name="Ryaboy D."/>
            <person name="Schmutz J."/>
            <person name="Schrader J."/>
            <person name="Segerman B."/>
            <person name="Shin H."/>
            <person name="Siddiqui A."/>
            <person name="Sterky F."/>
            <person name="Terry A."/>
            <person name="Tsai C.-J."/>
            <person name="Uberbacher E."/>
            <person name="Unneberg P."/>
            <person name="Vahala J."/>
            <person name="Wall K."/>
            <person name="Wessler S."/>
            <person name="Yang G."/>
            <person name="Yin T."/>
            <person name="Douglas C."/>
            <person name="Marra M."/>
            <person name="Sandberg G."/>
            <person name="Van de Peer Y."/>
            <person name="Rokhsar D.S."/>
        </authorList>
    </citation>
    <scope>NUCLEOTIDE SEQUENCE [LARGE SCALE GENOMIC DNA]</scope>
    <source>
        <strain>cv. Nisqually</strain>
    </source>
</reference>
<reference key="2">
    <citation type="submission" date="2008-12" db="EMBL/GenBank/DDBJ databases">
        <authorList>
            <consortium name="US DOE Joint Genome Institute (JGI-PGF)"/>
            <person name="Grigoriev I.V."/>
            <person name="Terry A."/>
            <person name="Salamov A.A."/>
            <person name="Otillar R."/>
            <person name="Lou Y."/>
            <person name="Lucas S."/>
            <person name="Hammon N."/>
            <person name="Glavina del Rio T."/>
            <person name="Detter J."/>
            <person name="Kalin E."/>
            <person name="Tice H."/>
            <person name="Pitluck S."/>
            <person name="Chapman J."/>
            <person name="Putnam N.H."/>
            <person name="Brunner A."/>
            <person name="Busov V."/>
            <person name="Campbell M."/>
            <person name="Chalot M."/>
            <person name="Covert S."/>
            <person name="Davis J."/>
            <person name="DiFazio S."/>
            <person name="Gribskov M."/>
            <person name="Gunter L."/>
            <person name="Hamberger B."/>
            <person name="Jansson S."/>
            <person name="Joshi C."/>
            <person name="Larimer F."/>
            <person name="Martin F."/>
            <person name="Napoli C."/>
            <person name="Nelson D."/>
            <person name="Ralph S."/>
            <person name="Rombauts S."/>
            <person name="Rouze P."/>
            <person name="Schrader J."/>
            <person name="Tsai C."/>
            <person name="Vahala J."/>
            <person name="Tuskan G."/>
            <person name="Rokhsar D."/>
        </authorList>
    </citation>
    <scope>GENOME REANNOTATION</scope>
    <source>
        <strain>cv. Nisqually</strain>
    </source>
</reference>
<reference key="3">
    <citation type="journal article" date="2014" name="Plant Physiol.">
        <title>Functional and evolutionary analysis of the CASPARIAN STRIP MEMBRANE DOMAIN PROTEIN family.</title>
        <authorList>
            <person name="Roppolo D."/>
            <person name="Boeckmann B."/>
            <person name="Pfister A."/>
            <person name="Boutet E."/>
            <person name="Rubio M.C."/>
            <person name="Denervaud-Tendon V."/>
            <person name="Vermeer J.E."/>
            <person name="Gheyselinck J."/>
            <person name="Xenarios I."/>
            <person name="Geldner N."/>
        </authorList>
    </citation>
    <scope>GENE FAMILY</scope>
    <scope>NOMENCLATURE</scope>
</reference>